<proteinExistence type="inferred from homology"/>
<protein>
    <recommendedName>
        <fullName evidence="1">Urease subunit beta</fullName>
        <ecNumber evidence="1">3.5.1.5</ecNumber>
    </recommendedName>
    <alternativeName>
        <fullName evidence="1">Urea amidohydrolase subunit beta</fullName>
    </alternativeName>
</protein>
<keyword id="KW-0963">Cytoplasm</keyword>
<keyword id="KW-0378">Hydrolase</keyword>
<keyword id="KW-1185">Reference proteome</keyword>
<organism>
    <name type="scientific">Halalkalibacterium halodurans (strain ATCC BAA-125 / DSM 18197 / FERM 7344 / JCM 9153 / C-125)</name>
    <name type="common">Bacillus halodurans</name>
    <dbReference type="NCBI Taxonomy" id="272558"/>
    <lineage>
        <taxon>Bacteria</taxon>
        <taxon>Bacillati</taxon>
        <taxon>Bacillota</taxon>
        <taxon>Bacilli</taxon>
        <taxon>Bacillales</taxon>
        <taxon>Bacillaceae</taxon>
        <taxon>Halalkalibacterium (ex Joshi et al. 2022)</taxon>
    </lineage>
</organism>
<dbReference type="EC" id="3.5.1.5" evidence="1"/>
<dbReference type="EMBL" id="BA000004">
    <property type="protein sequence ID" value="BAB03972.1"/>
    <property type="molecule type" value="Genomic_DNA"/>
</dbReference>
<dbReference type="PIR" id="E83681">
    <property type="entry name" value="E83681"/>
</dbReference>
<dbReference type="RefSeq" id="WP_010896435.1">
    <property type="nucleotide sequence ID" value="NC_002570.2"/>
</dbReference>
<dbReference type="SMR" id="Q9KG60"/>
<dbReference type="STRING" id="272558.gene:10726098"/>
<dbReference type="GeneID" id="87595806"/>
<dbReference type="KEGG" id="bha:BH0253"/>
<dbReference type="eggNOG" id="COG0832">
    <property type="taxonomic scope" value="Bacteria"/>
</dbReference>
<dbReference type="HOGENOM" id="CLU_129707_1_1_9"/>
<dbReference type="OrthoDB" id="9797217at2"/>
<dbReference type="UniPathway" id="UPA00258">
    <property type="reaction ID" value="UER00370"/>
</dbReference>
<dbReference type="Proteomes" id="UP000001258">
    <property type="component" value="Chromosome"/>
</dbReference>
<dbReference type="GO" id="GO:0035550">
    <property type="term" value="C:urease complex"/>
    <property type="evidence" value="ECO:0007669"/>
    <property type="project" value="InterPro"/>
</dbReference>
<dbReference type="GO" id="GO:0009039">
    <property type="term" value="F:urease activity"/>
    <property type="evidence" value="ECO:0007669"/>
    <property type="project" value="UniProtKB-UniRule"/>
</dbReference>
<dbReference type="GO" id="GO:0043419">
    <property type="term" value="P:urea catabolic process"/>
    <property type="evidence" value="ECO:0007669"/>
    <property type="project" value="UniProtKB-UniRule"/>
</dbReference>
<dbReference type="CDD" id="cd00407">
    <property type="entry name" value="Urease_beta"/>
    <property type="match status" value="1"/>
</dbReference>
<dbReference type="FunFam" id="2.10.150.10:FF:000001">
    <property type="entry name" value="Urease subunit beta"/>
    <property type="match status" value="1"/>
</dbReference>
<dbReference type="Gene3D" id="2.10.150.10">
    <property type="entry name" value="Urease, beta subunit"/>
    <property type="match status" value="1"/>
</dbReference>
<dbReference type="HAMAP" id="MF_01954">
    <property type="entry name" value="Urease_beta"/>
    <property type="match status" value="1"/>
</dbReference>
<dbReference type="InterPro" id="IPR002019">
    <property type="entry name" value="Urease_beta-like"/>
</dbReference>
<dbReference type="InterPro" id="IPR036461">
    <property type="entry name" value="Urease_betasu_sf"/>
</dbReference>
<dbReference type="InterPro" id="IPR050069">
    <property type="entry name" value="Urease_subunit"/>
</dbReference>
<dbReference type="NCBIfam" id="NF009682">
    <property type="entry name" value="PRK13203.1"/>
    <property type="match status" value="1"/>
</dbReference>
<dbReference type="NCBIfam" id="TIGR00192">
    <property type="entry name" value="urease_beta"/>
    <property type="match status" value="1"/>
</dbReference>
<dbReference type="PANTHER" id="PTHR33569">
    <property type="entry name" value="UREASE"/>
    <property type="match status" value="1"/>
</dbReference>
<dbReference type="PANTHER" id="PTHR33569:SF1">
    <property type="entry name" value="UREASE"/>
    <property type="match status" value="1"/>
</dbReference>
<dbReference type="Pfam" id="PF00699">
    <property type="entry name" value="Urease_beta"/>
    <property type="match status" value="1"/>
</dbReference>
<dbReference type="SUPFAM" id="SSF51278">
    <property type="entry name" value="Urease, beta-subunit"/>
    <property type="match status" value="1"/>
</dbReference>
<sequence>MIPGEVIPANGEVVLNKGRRMVKVLVAHTGDRPIQVGSHFHFAEVNRSLHFDRQEAFGMRLNIAAGTAVRFEPGEEKEVDLVEIGGKRQIYGLNGWTDGAIDDENLPSFLASYQVSEDKEDEEK</sequence>
<feature type="chain" id="PRO_0000234227" description="Urease subunit beta">
    <location>
        <begin position="1"/>
        <end position="124"/>
    </location>
</feature>
<gene>
    <name evidence="1" type="primary">ureB</name>
    <name type="ordered locus">BH0253</name>
</gene>
<accession>Q9KG60</accession>
<comment type="catalytic activity">
    <reaction evidence="1">
        <text>urea + 2 H2O + H(+) = hydrogencarbonate + 2 NH4(+)</text>
        <dbReference type="Rhea" id="RHEA:20557"/>
        <dbReference type="ChEBI" id="CHEBI:15377"/>
        <dbReference type="ChEBI" id="CHEBI:15378"/>
        <dbReference type="ChEBI" id="CHEBI:16199"/>
        <dbReference type="ChEBI" id="CHEBI:17544"/>
        <dbReference type="ChEBI" id="CHEBI:28938"/>
        <dbReference type="EC" id="3.5.1.5"/>
    </reaction>
</comment>
<comment type="pathway">
    <text evidence="1">Nitrogen metabolism; urea degradation; CO(2) and NH(3) from urea (urease route): step 1/1.</text>
</comment>
<comment type="subunit">
    <text evidence="1">Heterotrimer of UreA (gamma), UreB (beta) and UreC (alpha) subunits. Three heterotrimers associate to form the active enzyme.</text>
</comment>
<comment type="subcellular location">
    <subcellularLocation>
        <location evidence="1">Cytoplasm</location>
    </subcellularLocation>
</comment>
<comment type="similarity">
    <text evidence="1">Belongs to the urease beta subunit family.</text>
</comment>
<name>URE2_HALH5</name>
<reference key="1">
    <citation type="journal article" date="2000" name="Nucleic Acids Res.">
        <title>Complete genome sequence of the alkaliphilic bacterium Bacillus halodurans and genomic sequence comparison with Bacillus subtilis.</title>
        <authorList>
            <person name="Takami H."/>
            <person name="Nakasone K."/>
            <person name="Takaki Y."/>
            <person name="Maeno G."/>
            <person name="Sasaki R."/>
            <person name="Masui N."/>
            <person name="Fuji F."/>
            <person name="Hirama C."/>
            <person name="Nakamura Y."/>
            <person name="Ogasawara N."/>
            <person name="Kuhara S."/>
            <person name="Horikoshi K."/>
        </authorList>
    </citation>
    <scope>NUCLEOTIDE SEQUENCE [LARGE SCALE GENOMIC DNA]</scope>
    <source>
        <strain>ATCC BAA-125 / DSM 18197 / FERM 7344 / JCM 9153 / C-125</strain>
    </source>
</reference>
<evidence type="ECO:0000255" key="1">
    <source>
        <dbReference type="HAMAP-Rule" id="MF_01954"/>
    </source>
</evidence>